<feature type="peptide" id="PRO_0000043802" description="Granuliberin-R">
    <location>
        <begin position="1"/>
        <end position="12"/>
    </location>
</feature>
<feature type="modified residue" description="Serine amide" evidence="1">
    <location>
        <position position="12"/>
    </location>
</feature>
<reference key="1">
    <citation type="journal article" date="1977" name="Chem. Pharm. Bull.">
        <title>A new mast cell degranulating peptide, granuliberin-R, in the frog (Rana rugosa) skin.</title>
        <authorList>
            <person name="Nakajima T."/>
            <person name="Yasuhara T."/>
        </authorList>
    </citation>
    <scope>PROTEIN SEQUENCE</scope>
    <scope>AMIDATION AT SER-12</scope>
    <source>
        <tissue>Skin secretion</tissue>
    </source>
</reference>
<reference key="2">
    <citation type="journal article" date="1978" name="Chem. Pharm. Bull.">
        <title>Synthesis of the dodecapeptide amide corresponding to the entire amino acid sequence of granuliberin-R, a new frog skin peptide from Rana rugosa.</title>
        <authorList>
            <person name="Nakajima T."/>
            <person name="Yasuhara T."/>
            <person name="Hirai Y."/>
            <person name="Kitada C."/>
            <person name="Fujino M."/>
            <person name="Takeyama M."/>
            <person name="Koyama K."/>
            <person name="Yajima H."/>
        </authorList>
    </citation>
    <scope>SYNTHESIS</scope>
</reference>
<name>GRAR_GLARU</name>
<keyword id="KW-0027">Amidation</keyword>
<keyword id="KW-0878">Amphibian defense peptide</keyword>
<keyword id="KW-0903">Direct protein sequencing</keyword>
<keyword id="KW-0467">Mast cell degranulation</keyword>
<keyword id="KW-0964">Secreted</keyword>
<sequence>FGFLPIYRRPAS</sequence>
<accession>P40754</accession>
<proteinExistence type="evidence at protein level"/>
<dbReference type="GO" id="GO:0005576">
    <property type="term" value="C:extracellular region"/>
    <property type="evidence" value="ECO:0007669"/>
    <property type="project" value="UniProtKB-SubCell"/>
</dbReference>
<dbReference type="GO" id="GO:0006952">
    <property type="term" value="P:defense response"/>
    <property type="evidence" value="ECO:0007669"/>
    <property type="project" value="UniProtKB-KW"/>
</dbReference>
<dbReference type="GO" id="GO:0043303">
    <property type="term" value="P:mast cell degranulation"/>
    <property type="evidence" value="ECO:0007669"/>
    <property type="project" value="UniProtKB-KW"/>
</dbReference>
<organism>
    <name type="scientific">Glandirana rugosa</name>
    <name type="common">Japanese wrinkled frog</name>
    <name type="synonym">Rana rugosa</name>
    <dbReference type="NCBI Taxonomy" id="8410"/>
    <lineage>
        <taxon>Eukaryota</taxon>
        <taxon>Metazoa</taxon>
        <taxon>Chordata</taxon>
        <taxon>Craniata</taxon>
        <taxon>Vertebrata</taxon>
        <taxon>Euteleostomi</taxon>
        <taxon>Amphibia</taxon>
        <taxon>Batrachia</taxon>
        <taxon>Anura</taxon>
        <taxon>Neobatrachia</taxon>
        <taxon>Ranoidea</taxon>
        <taxon>Ranidae</taxon>
        <taxon>Glandirana</taxon>
    </lineage>
</organism>
<evidence type="ECO:0000269" key="1">
    <source>
    </source>
</evidence>
<protein>
    <recommendedName>
        <fullName>Granuliberin-R</fullName>
    </recommendedName>
</protein>
<comment type="function">
    <text>Mast cell degranulating peptide.</text>
</comment>
<comment type="subcellular location">
    <subcellularLocation>
        <location>Secreted</location>
    </subcellularLocation>
</comment>
<comment type="tissue specificity">
    <text>Expressed by the skin glands.</text>
</comment>